<keyword id="KW-0414">Isoprene biosynthesis</keyword>
<keyword id="KW-0460">Magnesium</keyword>
<keyword id="KW-0479">Metal-binding</keyword>
<keyword id="KW-1185">Reference proteome</keyword>
<keyword id="KW-0784">Thiamine biosynthesis</keyword>
<keyword id="KW-0786">Thiamine pyrophosphate</keyword>
<keyword id="KW-0808">Transferase</keyword>
<proteinExistence type="inferred from homology"/>
<accession>Q5LX42</accession>
<name>DXS_RUEPO</name>
<evidence type="ECO:0000255" key="1">
    <source>
        <dbReference type="HAMAP-Rule" id="MF_00315"/>
    </source>
</evidence>
<sequence>MSDRPHTPLLDQVTRPADLKRFSDAQLTQLAGELRAETVSAVSVTGGHLGAGLGVVELTVALHAVFDTPRDKVIWDVGHQCYPHKILTERRDRIRTLRMKDGLSGFTKRSESPYDPFGAAHSSTSISAALGFAVARDLGGVTPEGLGDAIAVIGDGSMSAGMAFEAMNNAGHLKKRLIVILNDNEMSIAPPVGALSNYLSRLYAEEPFQELKAAAKGAVSLLPEPFREGAKRAKEMLKGMAVGGTLFEELGFSYIGPIDGHDMGQLLPVLRTVKARATGPILLHVLTKKGKGYAPAERARDRGHATAKFDVVTGEQKKAPSNAPSYTAVFGKALVDQAARDDKIVAVTAAMPDGTGLNLFAERYPSRCFDVGIAEQHGVTFSAALAAGGLKPFCAMYSTFLQRGYDQVVHDVAIQRLPVRFAIDRAGLVGADGATHAGSFDIAYLANLPGMVVMAAADEAELVHMVATAAAHDDGPIAFRYPRGEGVGVEMPELGKVLEIGKGRMIQKGARVALLSFGTRLTEVQKAAEALAARGITPTIADARFAKPLDRDLILNLAHDHEALITIEEGAVGGFGSHVAQLLADEGVFDHGLKFRSMVLPDIFIDQSSPADMYAVAGMNAPQIEAKVLDVLGIGRIGEKRA</sequence>
<feature type="chain" id="PRO_0000256486" description="1-deoxy-D-xylulose-5-phosphate synthase">
    <location>
        <begin position="1"/>
        <end position="642"/>
    </location>
</feature>
<feature type="binding site" evidence="1">
    <location>
        <position position="79"/>
    </location>
    <ligand>
        <name>thiamine diphosphate</name>
        <dbReference type="ChEBI" id="CHEBI:58937"/>
    </ligand>
</feature>
<feature type="binding site" evidence="1">
    <location>
        <begin position="120"/>
        <end position="122"/>
    </location>
    <ligand>
        <name>thiamine diphosphate</name>
        <dbReference type="ChEBI" id="CHEBI:58937"/>
    </ligand>
</feature>
<feature type="binding site" evidence="1">
    <location>
        <position position="155"/>
    </location>
    <ligand>
        <name>Mg(2+)</name>
        <dbReference type="ChEBI" id="CHEBI:18420"/>
    </ligand>
</feature>
<feature type="binding site" evidence="1">
    <location>
        <begin position="156"/>
        <end position="157"/>
    </location>
    <ligand>
        <name>thiamine diphosphate</name>
        <dbReference type="ChEBI" id="CHEBI:58937"/>
    </ligand>
</feature>
<feature type="binding site" evidence="1">
    <location>
        <position position="184"/>
    </location>
    <ligand>
        <name>Mg(2+)</name>
        <dbReference type="ChEBI" id="CHEBI:18420"/>
    </ligand>
</feature>
<feature type="binding site" evidence="1">
    <location>
        <position position="184"/>
    </location>
    <ligand>
        <name>thiamine diphosphate</name>
        <dbReference type="ChEBI" id="CHEBI:58937"/>
    </ligand>
</feature>
<feature type="binding site" evidence="1">
    <location>
        <position position="293"/>
    </location>
    <ligand>
        <name>thiamine diphosphate</name>
        <dbReference type="ChEBI" id="CHEBI:58937"/>
    </ligand>
</feature>
<feature type="binding site" evidence="1">
    <location>
        <position position="375"/>
    </location>
    <ligand>
        <name>thiamine diphosphate</name>
        <dbReference type="ChEBI" id="CHEBI:58937"/>
    </ligand>
</feature>
<dbReference type="EC" id="2.2.1.7" evidence="1"/>
<dbReference type="EMBL" id="CP000031">
    <property type="protein sequence ID" value="AAV93567.1"/>
    <property type="molecule type" value="Genomic_DNA"/>
</dbReference>
<dbReference type="RefSeq" id="WP_011046009.1">
    <property type="nucleotide sequence ID" value="NC_003911.12"/>
</dbReference>
<dbReference type="SMR" id="Q5LX42"/>
<dbReference type="STRING" id="246200.SPO0247"/>
<dbReference type="PaxDb" id="246200-SPO0247"/>
<dbReference type="KEGG" id="sil:SPO0247"/>
<dbReference type="eggNOG" id="COG1154">
    <property type="taxonomic scope" value="Bacteria"/>
</dbReference>
<dbReference type="HOGENOM" id="CLU_009227_1_4_5"/>
<dbReference type="OrthoDB" id="9803371at2"/>
<dbReference type="UniPathway" id="UPA00064">
    <property type="reaction ID" value="UER00091"/>
</dbReference>
<dbReference type="Proteomes" id="UP000001023">
    <property type="component" value="Chromosome"/>
</dbReference>
<dbReference type="GO" id="GO:0008661">
    <property type="term" value="F:1-deoxy-D-xylulose-5-phosphate synthase activity"/>
    <property type="evidence" value="ECO:0007669"/>
    <property type="project" value="UniProtKB-UniRule"/>
</dbReference>
<dbReference type="GO" id="GO:0000287">
    <property type="term" value="F:magnesium ion binding"/>
    <property type="evidence" value="ECO:0007669"/>
    <property type="project" value="UniProtKB-UniRule"/>
</dbReference>
<dbReference type="GO" id="GO:0030976">
    <property type="term" value="F:thiamine pyrophosphate binding"/>
    <property type="evidence" value="ECO:0007669"/>
    <property type="project" value="UniProtKB-UniRule"/>
</dbReference>
<dbReference type="GO" id="GO:0052865">
    <property type="term" value="P:1-deoxy-D-xylulose 5-phosphate biosynthetic process"/>
    <property type="evidence" value="ECO:0007669"/>
    <property type="project" value="UniProtKB-UniPathway"/>
</dbReference>
<dbReference type="GO" id="GO:0019682">
    <property type="term" value="P:glyceraldehyde-3-phosphate metabolic process"/>
    <property type="evidence" value="ECO:0007669"/>
    <property type="project" value="UniProtKB-ARBA"/>
</dbReference>
<dbReference type="GO" id="GO:0016114">
    <property type="term" value="P:terpenoid biosynthetic process"/>
    <property type="evidence" value="ECO:0007669"/>
    <property type="project" value="UniProtKB-UniRule"/>
</dbReference>
<dbReference type="GO" id="GO:0009228">
    <property type="term" value="P:thiamine biosynthetic process"/>
    <property type="evidence" value="ECO:0007669"/>
    <property type="project" value="UniProtKB-UniRule"/>
</dbReference>
<dbReference type="CDD" id="cd02007">
    <property type="entry name" value="TPP_DXS"/>
    <property type="match status" value="1"/>
</dbReference>
<dbReference type="CDD" id="cd07033">
    <property type="entry name" value="TPP_PYR_DXS_TK_like"/>
    <property type="match status" value="1"/>
</dbReference>
<dbReference type="FunFam" id="3.40.50.920:FF:000002">
    <property type="entry name" value="1-deoxy-D-xylulose-5-phosphate synthase"/>
    <property type="match status" value="1"/>
</dbReference>
<dbReference type="FunFam" id="3.40.50.970:FF:000005">
    <property type="entry name" value="1-deoxy-D-xylulose-5-phosphate synthase"/>
    <property type="match status" value="1"/>
</dbReference>
<dbReference type="Gene3D" id="3.40.50.920">
    <property type="match status" value="1"/>
</dbReference>
<dbReference type="Gene3D" id="3.40.50.970">
    <property type="match status" value="2"/>
</dbReference>
<dbReference type="HAMAP" id="MF_00315">
    <property type="entry name" value="DXP_synth"/>
    <property type="match status" value="1"/>
</dbReference>
<dbReference type="InterPro" id="IPR005477">
    <property type="entry name" value="Dxylulose-5-P_synthase"/>
</dbReference>
<dbReference type="InterPro" id="IPR029061">
    <property type="entry name" value="THDP-binding"/>
</dbReference>
<dbReference type="InterPro" id="IPR009014">
    <property type="entry name" value="Transketo_C/PFOR_II"/>
</dbReference>
<dbReference type="InterPro" id="IPR005475">
    <property type="entry name" value="Transketolase-like_Pyr-bd"/>
</dbReference>
<dbReference type="InterPro" id="IPR020826">
    <property type="entry name" value="Transketolase_BS"/>
</dbReference>
<dbReference type="InterPro" id="IPR033248">
    <property type="entry name" value="Transketolase_C"/>
</dbReference>
<dbReference type="InterPro" id="IPR049557">
    <property type="entry name" value="Transketolase_CS"/>
</dbReference>
<dbReference type="NCBIfam" id="TIGR00204">
    <property type="entry name" value="dxs"/>
    <property type="match status" value="1"/>
</dbReference>
<dbReference type="NCBIfam" id="NF003933">
    <property type="entry name" value="PRK05444.2-2"/>
    <property type="match status" value="1"/>
</dbReference>
<dbReference type="PANTHER" id="PTHR43322">
    <property type="entry name" value="1-D-DEOXYXYLULOSE 5-PHOSPHATE SYNTHASE-RELATED"/>
    <property type="match status" value="1"/>
</dbReference>
<dbReference type="PANTHER" id="PTHR43322:SF5">
    <property type="entry name" value="1-DEOXY-D-XYLULOSE-5-PHOSPHATE SYNTHASE, CHLOROPLASTIC"/>
    <property type="match status" value="1"/>
</dbReference>
<dbReference type="Pfam" id="PF13292">
    <property type="entry name" value="DXP_synthase_N"/>
    <property type="match status" value="1"/>
</dbReference>
<dbReference type="Pfam" id="PF02779">
    <property type="entry name" value="Transket_pyr"/>
    <property type="match status" value="1"/>
</dbReference>
<dbReference type="Pfam" id="PF02780">
    <property type="entry name" value="Transketolase_C"/>
    <property type="match status" value="1"/>
</dbReference>
<dbReference type="SMART" id="SM00861">
    <property type="entry name" value="Transket_pyr"/>
    <property type="match status" value="1"/>
</dbReference>
<dbReference type="SUPFAM" id="SSF52518">
    <property type="entry name" value="Thiamin diphosphate-binding fold (THDP-binding)"/>
    <property type="match status" value="2"/>
</dbReference>
<dbReference type="SUPFAM" id="SSF52922">
    <property type="entry name" value="TK C-terminal domain-like"/>
    <property type="match status" value="1"/>
</dbReference>
<dbReference type="PROSITE" id="PS00801">
    <property type="entry name" value="TRANSKETOLASE_1"/>
    <property type="match status" value="1"/>
</dbReference>
<dbReference type="PROSITE" id="PS00802">
    <property type="entry name" value="TRANSKETOLASE_2"/>
    <property type="match status" value="1"/>
</dbReference>
<reference key="1">
    <citation type="journal article" date="2004" name="Nature">
        <title>Genome sequence of Silicibacter pomeroyi reveals adaptations to the marine environment.</title>
        <authorList>
            <person name="Moran M.A."/>
            <person name="Buchan A."/>
            <person name="Gonzalez J.M."/>
            <person name="Heidelberg J.F."/>
            <person name="Whitman W.B."/>
            <person name="Kiene R.P."/>
            <person name="Henriksen J.R."/>
            <person name="King G.M."/>
            <person name="Belas R."/>
            <person name="Fuqua C."/>
            <person name="Brinkac L.M."/>
            <person name="Lewis M."/>
            <person name="Johri S."/>
            <person name="Weaver B."/>
            <person name="Pai G."/>
            <person name="Eisen J.A."/>
            <person name="Rahe E."/>
            <person name="Sheldon W.M."/>
            <person name="Ye W."/>
            <person name="Miller T.R."/>
            <person name="Carlton J."/>
            <person name="Rasko D.A."/>
            <person name="Paulsen I.T."/>
            <person name="Ren Q."/>
            <person name="Daugherty S.C."/>
            <person name="DeBoy R.T."/>
            <person name="Dodson R.J."/>
            <person name="Durkin A.S."/>
            <person name="Madupu R."/>
            <person name="Nelson W.C."/>
            <person name="Sullivan S.A."/>
            <person name="Rosovitz M.J."/>
            <person name="Haft D.H."/>
            <person name="Selengut J."/>
            <person name="Ward N."/>
        </authorList>
    </citation>
    <scope>NUCLEOTIDE SEQUENCE [LARGE SCALE GENOMIC DNA]</scope>
    <source>
        <strain>ATCC 700808 / DSM 15171 / DSS-3</strain>
    </source>
</reference>
<reference key="2">
    <citation type="journal article" date="2014" name="Stand. Genomic Sci.">
        <title>An updated genome annotation for the model marine bacterium Ruegeria pomeroyi DSS-3.</title>
        <authorList>
            <person name="Rivers A.R."/>
            <person name="Smith C.B."/>
            <person name="Moran M.A."/>
        </authorList>
    </citation>
    <scope>GENOME REANNOTATION</scope>
    <source>
        <strain>ATCC 700808 / DSM 15171 / DSS-3</strain>
    </source>
</reference>
<comment type="function">
    <text evidence="1">Catalyzes the acyloin condensation reaction between C atoms 2 and 3 of pyruvate and glyceraldehyde 3-phosphate to yield 1-deoxy-D-xylulose-5-phosphate (DXP).</text>
</comment>
<comment type="catalytic activity">
    <reaction evidence="1">
        <text>D-glyceraldehyde 3-phosphate + pyruvate + H(+) = 1-deoxy-D-xylulose 5-phosphate + CO2</text>
        <dbReference type="Rhea" id="RHEA:12605"/>
        <dbReference type="ChEBI" id="CHEBI:15361"/>
        <dbReference type="ChEBI" id="CHEBI:15378"/>
        <dbReference type="ChEBI" id="CHEBI:16526"/>
        <dbReference type="ChEBI" id="CHEBI:57792"/>
        <dbReference type="ChEBI" id="CHEBI:59776"/>
        <dbReference type="EC" id="2.2.1.7"/>
    </reaction>
</comment>
<comment type="cofactor">
    <cofactor evidence="1">
        <name>Mg(2+)</name>
        <dbReference type="ChEBI" id="CHEBI:18420"/>
    </cofactor>
    <text evidence="1">Binds 1 Mg(2+) ion per subunit.</text>
</comment>
<comment type="cofactor">
    <cofactor evidence="1">
        <name>thiamine diphosphate</name>
        <dbReference type="ChEBI" id="CHEBI:58937"/>
    </cofactor>
    <text evidence="1">Binds 1 thiamine pyrophosphate per subunit.</text>
</comment>
<comment type="pathway">
    <text evidence="1">Metabolic intermediate biosynthesis; 1-deoxy-D-xylulose 5-phosphate biosynthesis; 1-deoxy-D-xylulose 5-phosphate from D-glyceraldehyde 3-phosphate and pyruvate: step 1/1.</text>
</comment>
<comment type="subunit">
    <text evidence="1">Homodimer.</text>
</comment>
<comment type="similarity">
    <text evidence="1">Belongs to the transketolase family. DXPS subfamily.</text>
</comment>
<protein>
    <recommendedName>
        <fullName evidence="1">1-deoxy-D-xylulose-5-phosphate synthase</fullName>
        <ecNumber evidence="1">2.2.1.7</ecNumber>
    </recommendedName>
    <alternativeName>
        <fullName evidence="1">1-deoxyxylulose-5-phosphate synthase</fullName>
        <shortName evidence="1">DXP synthase</shortName>
        <shortName evidence="1">DXPS</shortName>
    </alternativeName>
</protein>
<organism>
    <name type="scientific">Ruegeria pomeroyi (strain ATCC 700808 / DSM 15171 / DSS-3)</name>
    <name type="common">Silicibacter pomeroyi</name>
    <dbReference type="NCBI Taxonomy" id="246200"/>
    <lineage>
        <taxon>Bacteria</taxon>
        <taxon>Pseudomonadati</taxon>
        <taxon>Pseudomonadota</taxon>
        <taxon>Alphaproteobacteria</taxon>
        <taxon>Rhodobacterales</taxon>
        <taxon>Roseobacteraceae</taxon>
        <taxon>Ruegeria</taxon>
    </lineage>
</organism>
<gene>
    <name evidence="1" type="primary">dxs</name>
    <name type="ordered locus">SPO0247</name>
</gene>